<accession>Q8RHN4</accession>
<reference key="1">
    <citation type="journal article" date="2002" name="J. Bacteriol.">
        <title>Genome sequence and analysis of the oral bacterium Fusobacterium nucleatum strain ATCC 25586.</title>
        <authorList>
            <person name="Kapatral V."/>
            <person name="Anderson I."/>
            <person name="Ivanova N."/>
            <person name="Reznik G."/>
            <person name="Los T."/>
            <person name="Lykidis A."/>
            <person name="Bhattacharyya A."/>
            <person name="Bartman A."/>
            <person name="Gardner W."/>
            <person name="Grechkin G."/>
            <person name="Zhu L."/>
            <person name="Vasieva O."/>
            <person name="Chu L."/>
            <person name="Kogan Y."/>
            <person name="Chaga O."/>
            <person name="Goltsman E."/>
            <person name="Bernal A."/>
            <person name="Larsen N."/>
            <person name="D'Souza M."/>
            <person name="Walunas T."/>
            <person name="Pusch G."/>
            <person name="Haselkorn R."/>
            <person name="Fonstein M."/>
            <person name="Kyrpides N.C."/>
            <person name="Overbeek R."/>
        </authorList>
    </citation>
    <scope>NUCLEOTIDE SEQUENCE [LARGE SCALE GENOMIC DNA]</scope>
    <source>
        <strain>ATCC 25586 / DSM 15643 / BCRC 10681 / CIP 101130 / JCM 8532 / KCTC 2640 / LMG 13131 / VPI 4355</strain>
    </source>
</reference>
<feature type="chain" id="PRO_0000115441" description="Small ribosomal subunit protein uS15">
    <location>
        <begin position="1"/>
        <end position="85"/>
    </location>
</feature>
<organism>
    <name type="scientific">Fusobacterium nucleatum subsp. nucleatum (strain ATCC 25586 / DSM 15643 / BCRC 10681 / CIP 101130 / JCM 8532 / KCTC 2640 / LMG 13131 / VPI 4355)</name>
    <dbReference type="NCBI Taxonomy" id="190304"/>
    <lineage>
        <taxon>Bacteria</taxon>
        <taxon>Fusobacteriati</taxon>
        <taxon>Fusobacteriota</taxon>
        <taxon>Fusobacteriia</taxon>
        <taxon>Fusobacteriales</taxon>
        <taxon>Fusobacteriaceae</taxon>
        <taxon>Fusobacterium</taxon>
    </lineage>
</organism>
<gene>
    <name evidence="1" type="primary">rpsO</name>
    <name type="ordered locus">FN1979</name>
</gene>
<sequence length="85" mass="9785">MRTKAEIIKEFGKSEADTGSTEVQIALLTEKINHLTEHLRVHKKDFHSRLGLLKMVGQRKRLLAYLTKKDLEGYRALIAKLGIRK</sequence>
<evidence type="ECO:0000255" key="1">
    <source>
        <dbReference type="HAMAP-Rule" id="MF_01343"/>
    </source>
</evidence>
<evidence type="ECO:0000305" key="2"/>
<keyword id="KW-1185">Reference proteome</keyword>
<keyword id="KW-0687">Ribonucleoprotein</keyword>
<keyword id="KW-0689">Ribosomal protein</keyword>
<keyword id="KW-0694">RNA-binding</keyword>
<keyword id="KW-0699">rRNA-binding</keyword>
<protein>
    <recommendedName>
        <fullName evidence="1">Small ribosomal subunit protein uS15</fullName>
    </recommendedName>
    <alternativeName>
        <fullName evidence="2">30S ribosomal protein S15</fullName>
    </alternativeName>
</protein>
<comment type="function">
    <text evidence="1">One of the primary rRNA binding proteins, it binds directly to 16S rRNA where it helps nucleate assembly of the platform of the 30S subunit by binding and bridging several RNA helices of the 16S rRNA.</text>
</comment>
<comment type="function">
    <text evidence="1">Forms an intersubunit bridge (bridge B4) with the 23S rRNA of the 50S subunit in the ribosome.</text>
</comment>
<comment type="subunit">
    <text evidence="1">Part of the 30S ribosomal subunit. Forms a bridge to the 50S subunit in the 70S ribosome, contacting the 23S rRNA.</text>
</comment>
<comment type="similarity">
    <text evidence="1">Belongs to the universal ribosomal protein uS15 family.</text>
</comment>
<name>RS15_FUSNN</name>
<proteinExistence type="inferred from homology"/>
<dbReference type="EMBL" id="AE009951">
    <property type="protein sequence ID" value="AAL94069.1"/>
    <property type="molecule type" value="Genomic_DNA"/>
</dbReference>
<dbReference type="RefSeq" id="NP_602770.1">
    <property type="nucleotide sequence ID" value="NC_003454.1"/>
</dbReference>
<dbReference type="RefSeq" id="WP_005890045.1">
    <property type="nucleotide sequence ID" value="NZ_OZ209243.1"/>
</dbReference>
<dbReference type="SMR" id="Q8RHN4"/>
<dbReference type="FunCoup" id="Q8RHN4">
    <property type="interactions" value="321"/>
</dbReference>
<dbReference type="STRING" id="190304.FN1979"/>
<dbReference type="PaxDb" id="190304-FN1979"/>
<dbReference type="EnsemblBacteria" id="AAL94069">
    <property type="protein sequence ID" value="AAL94069"/>
    <property type="gene ID" value="FN1979"/>
</dbReference>
<dbReference type="GeneID" id="93327520"/>
<dbReference type="KEGG" id="fnu:FN1979"/>
<dbReference type="PATRIC" id="fig|190304.8.peg.444"/>
<dbReference type="eggNOG" id="COG0184">
    <property type="taxonomic scope" value="Bacteria"/>
</dbReference>
<dbReference type="HOGENOM" id="CLU_148518_0_0_0"/>
<dbReference type="InParanoid" id="Q8RHN4"/>
<dbReference type="BioCyc" id="FNUC190304:G1FZS-471-MONOMER"/>
<dbReference type="Proteomes" id="UP000002521">
    <property type="component" value="Chromosome"/>
</dbReference>
<dbReference type="GO" id="GO:0022627">
    <property type="term" value="C:cytosolic small ribosomal subunit"/>
    <property type="evidence" value="ECO:0000318"/>
    <property type="project" value="GO_Central"/>
</dbReference>
<dbReference type="GO" id="GO:0019843">
    <property type="term" value="F:rRNA binding"/>
    <property type="evidence" value="ECO:0007669"/>
    <property type="project" value="UniProtKB-UniRule"/>
</dbReference>
<dbReference type="GO" id="GO:0003735">
    <property type="term" value="F:structural constituent of ribosome"/>
    <property type="evidence" value="ECO:0007669"/>
    <property type="project" value="InterPro"/>
</dbReference>
<dbReference type="GO" id="GO:0006412">
    <property type="term" value="P:translation"/>
    <property type="evidence" value="ECO:0007669"/>
    <property type="project" value="UniProtKB-UniRule"/>
</dbReference>
<dbReference type="CDD" id="cd00353">
    <property type="entry name" value="Ribosomal_S15p_S13e"/>
    <property type="match status" value="1"/>
</dbReference>
<dbReference type="FunFam" id="1.10.287.10:FF:000002">
    <property type="entry name" value="30S ribosomal protein S15"/>
    <property type="match status" value="1"/>
</dbReference>
<dbReference type="Gene3D" id="6.10.250.3130">
    <property type="match status" value="1"/>
</dbReference>
<dbReference type="Gene3D" id="1.10.287.10">
    <property type="entry name" value="S15/NS1, RNA-binding"/>
    <property type="match status" value="1"/>
</dbReference>
<dbReference type="HAMAP" id="MF_01343_B">
    <property type="entry name" value="Ribosomal_uS15_B"/>
    <property type="match status" value="1"/>
</dbReference>
<dbReference type="InterPro" id="IPR000589">
    <property type="entry name" value="Ribosomal_uS15"/>
</dbReference>
<dbReference type="InterPro" id="IPR005290">
    <property type="entry name" value="Ribosomal_uS15_bac-type"/>
</dbReference>
<dbReference type="InterPro" id="IPR009068">
    <property type="entry name" value="uS15_NS1_RNA-bd_sf"/>
</dbReference>
<dbReference type="NCBIfam" id="TIGR00952">
    <property type="entry name" value="S15_bact"/>
    <property type="match status" value="1"/>
</dbReference>
<dbReference type="PANTHER" id="PTHR23321">
    <property type="entry name" value="RIBOSOMAL PROTEIN S15, BACTERIAL AND ORGANELLAR"/>
    <property type="match status" value="1"/>
</dbReference>
<dbReference type="PANTHER" id="PTHR23321:SF26">
    <property type="entry name" value="SMALL RIBOSOMAL SUBUNIT PROTEIN US15M"/>
    <property type="match status" value="1"/>
</dbReference>
<dbReference type="Pfam" id="PF00312">
    <property type="entry name" value="Ribosomal_S15"/>
    <property type="match status" value="1"/>
</dbReference>
<dbReference type="SMART" id="SM01387">
    <property type="entry name" value="Ribosomal_S15"/>
    <property type="match status" value="1"/>
</dbReference>
<dbReference type="SUPFAM" id="SSF47060">
    <property type="entry name" value="S15/NS1 RNA-binding domain"/>
    <property type="match status" value="1"/>
</dbReference>
<dbReference type="PROSITE" id="PS00362">
    <property type="entry name" value="RIBOSOMAL_S15"/>
    <property type="match status" value="1"/>
</dbReference>